<sequence>MDFDAIVIGGGHAGIEAALALSRLNFKTLMITQNLDTIGKLSCNPAIGGLAKGNMVREIDALGGEMGRIIDFSMIQFRVLNKSRGPAVQAPRAQADKLMYQTKAKETLERQDNLDLFQDTVVDFLLNSMRNEIEGVVTERGNKFRSSVVVLTTGTFLRGKIFIGEYRADMGRLAEFSAYGLDKTLLGLGFEMGRLKTGTPARIHKKSVDFSKTEVQFGDSDIIPFSFSNGKLDKSQLSCYVTYTNKKTHEIISENMHLSPLYSGEIVGNGPRYCPSIEDKIVKFKDKDRHQIFIEPEGFNTEEMYLNGLSSSLPENIQQKLINSIEGLEHAVITRPGYAVEYDYINPIELYPNLESKRVKGLFIAGQTNGSSGYEEAAAQGLMAGINAALRLQNKKPMILTRTSSYIGVLIDDLVTKGTKEPYRMFTSRAEHRLNLRHDTSDKRLIKIGYDLGLVDEKRYSRYLFKESRVEEIKELLKQRRLSLKDVVDEQLKKHVSKDFYHILKDPSISLDNLIKIDPSLSDSKVILEQVELDVKYEGYINRQKDLIKRLDNLELVKLPFDFNYEIIEGLSREAREKFSKIQPATLAQASRIPGIRSTDITVLLIYFSNPKNKVVINFSL</sequence>
<proteinExistence type="inferred from homology"/>
<reference key="1">
    <citation type="journal article" date="1992" name="FEMS Microbiol. Lett.">
        <title>Mapping of genes on the linear chromosome of the bacterium Borrelia burgdorferi: possible locations for its origin of replication.</title>
        <authorList>
            <person name="Old I.G."/>
            <person name="Macdougall J.H."/>
            <person name="Saint-Girons I."/>
            <person name="Davidson B.E."/>
        </authorList>
    </citation>
    <scope>NUCLEOTIDE SEQUENCE [GENOMIC DNA]</scope>
    <source>
        <strain>212</strain>
    </source>
</reference>
<reference key="2">
    <citation type="journal article" date="1997" name="Nature">
        <title>Genomic sequence of a Lyme disease spirochaete, Borrelia burgdorferi.</title>
        <authorList>
            <person name="Fraser C.M."/>
            <person name="Casjens S."/>
            <person name="Huang W.M."/>
            <person name="Sutton G.G."/>
            <person name="Clayton R.A."/>
            <person name="Lathigra R."/>
            <person name="White O."/>
            <person name="Ketchum K.A."/>
            <person name="Dodson R.J."/>
            <person name="Hickey E.K."/>
            <person name="Gwinn M.L."/>
            <person name="Dougherty B.A."/>
            <person name="Tomb J.-F."/>
            <person name="Fleischmann R.D."/>
            <person name="Richardson D.L."/>
            <person name="Peterson J.D."/>
            <person name="Kerlavage A.R."/>
            <person name="Quackenbush J."/>
            <person name="Salzberg S.L."/>
            <person name="Hanson M."/>
            <person name="van Vugt R."/>
            <person name="Palmer N."/>
            <person name="Adams M.D."/>
            <person name="Gocayne J.D."/>
            <person name="Weidman J.F."/>
            <person name="Utterback T.R."/>
            <person name="Watthey L."/>
            <person name="McDonald L.A."/>
            <person name="Artiach P."/>
            <person name="Bowman C."/>
            <person name="Garland S.A."/>
            <person name="Fujii C."/>
            <person name="Cotton M.D."/>
            <person name="Horst K."/>
            <person name="Roberts K.M."/>
            <person name="Hatch B."/>
            <person name="Smith H.O."/>
            <person name="Venter J.C."/>
        </authorList>
    </citation>
    <scope>NUCLEOTIDE SEQUENCE [LARGE SCALE GENOMIC DNA]</scope>
    <source>
        <strain>ATCC 35210 / DSM 4680 / CIP 102532 / B31</strain>
    </source>
</reference>
<reference key="3">
    <citation type="submission" date="1996-02" db="EMBL/GenBank/DDBJ databases">
        <authorList>
            <person name="Old I.G."/>
        </authorList>
    </citation>
    <scope>NUCLEOTIDE SEQUENCE [GENOMIC DNA] OF 1-29 AND 597-621</scope>
    <source>
        <strain>212</strain>
    </source>
</reference>
<protein>
    <recommendedName>
        <fullName evidence="1">tRNA uridine 5-carboxymethylaminomethyl modification enzyme MnmG</fullName>
    </recommendedName>
    <alternativeName>
        <fullName evidence="1">Glucose-inhibited division protein A</fullName>
    </alternativeName>
</protein>
<comment type="function">
    <text evidence="1">NAD-binding protein involved in the addition of a carboxymethylaminomethyl (cmnm) group at the wobble position (U34) of certain tRNAs, forming tRNA-cmnm(5)s(2)U34.</text>
</comment>
<comment type="cofactor">
    <cofactor evidence="1">
        <name>FAD</name>
        <dbReference type="ChEBI" id="CHEBI:57692"/>
    </cofactor>
</comment>
<comment type="subunit">
    <text evidence="1">Homodimer. Heterotetramer of two MnmE and two MnmG subunits.</text>
</comment>
<comment type="subcellular location">
    <subcellularLocation>
        <location evidence="1">Cytoplasm</location>
    </subcellularLocation>
</comment>
<comment type="similarity">
    <text evidence="1">Belongs to the MnmG family.</text>
</comment>
<organism>
    <name type="scientific">Borreliella burgdorferi (strain ATCC 35210 / DSM 4680 / CIP 102532 / B31)</name>
    <name type="common">Borrelia burgdorferi</name>
    <dbReference type="NCBI Taxonomy" id="224326"/>
    <lineage>
        <taxon>Bacteria</taxon>
        <taxon>Pseudomonadati</taxon>
        <taxon>Spirochaetota</taxon>
        <taxon>Spirochaetia</taxon>
        <taxon>Spirochaetales</taxon>
        <taxon>Borreliaceae</taxon>
        <taxon>Borreliella</taxon>
    </lineage>
</organism>
<evidence type="ECO:0000255" key="1">
    <source>
        <dbReference type="HAMAP-Rule" id="MF_00129"/>
    </source>
</evidence>
<gene>
    <name evidence="1" type="primary">mnmG</name>
    <name evidence="1" type="synonym">gidA</name>
    <name type="ordered locus">BB_0178</name>
</gene>
<dbReference type="EMBL" id="Z12160">
    <property type="protein sequence ID" value="CAA78149.1"/>
    <property type="molecule type" value="Genomic_DNA"/>
</dbReference>
<dbReference type="EMBL" id="AJ003222">
    <property type="protein sequence ID" value="CAA06005.1"/>
    <property type="molecule type" value="Genomic_DNA"/>
</dbReference>
<dbReference type="EMBL" id="AE000783">
    <property type="protein sequence ID" value="AAC66557.2"/>
    <property type="molecule type" value="Genomic_DNA"/>
</dbReference>
<dbReference type="EMBL" id="X95669">
    <property type="protein sequence ID" value="CAA64972.1"/>
    <property type="molecule type" value="Genomic_DNA"/>
</dbReference>
<dbReference type="EMBL" id="X95668">
    <property type="protein sequence ID" value="CAA64968.1"/>
    <property type="molecule type" value="Genomic_DNA"/>
</dbReference>
<dbReference type="PIR" id="B70122">
    <property type="entry name" value="B70122"/>
</dbReference>
<dbReference type="RefSeq" id="NP_212312.2">
    <property type="nucleotide sequence ID" value="NC_001318.1"/>
</dbReference>
<dbReference type="RefSeq" id="WP_002657592.1">
    <property type="nucleotide sequence ID" value="NC_001318.1"/>
</dbReference>
<dbReference type="SMR" id="P53362"/>
<dbReference type="STRING" id="224326.BB_0178"/>
<dbReference type="PaxDb" id="224326-BB_0178"/>
<dbReference type="EnsemblBacteria" id="AAC66557">
    <property type="protein sequence ID" value="AAC66557"/>
    <property type="gene ID" value="BB_0178"/>
</dbReference>
<dbReference type="GeneID" id="56567605"/>
<dbReference type="KEGG" id="bbu:BB_0178"/>
<dbReference type="PATRIC" id="fig|224326.49.peg.575"/>
<dbReference type="HOGENOM" id="CLU_007831_2_2_12"/>
<dbReference type="OrthoDB" id="9815560at2"/>
<dbReference type="Proteomes" id="UP000001807">
    <property type="component" value="Chromosome"/>
</dbReference>
<dbReference type="GO" id="GO:0005829">
    <property type="term" value="C:cytosol"/>
    <property type="evidence" value="ECO:0007669"/>
    <property type="project" value="TreeGrafter"/>
</dbReference>
<dbReference type="GO" id="GO:0050660">
    <property type="term" value="F:flavin adenine dinucleotide binding"/>
    <property type="evidence" value="ECO:0007669"/>
    <property type="project" value="UniProtKB-UniRule"/>
</dbReference>
<dbReference type="GO" id="GO:0030488">
    <property type="term" value="P:tRNA methylation"/>
    <property type="evidence" value="ECO:0007669"/>
    <property type="project" value="TreeGrafter"/>
</dbReference>
<dbReference type="GO" id="GO:0002098">
    <property type="term" value="P:tRNA wobble uridine modification"/>
    <property type="evidence" value="ECO:0007669"/>
    <property type="project" value="InterPro"/>
</dbReference>
<dbReference type="FunFam" id="1.10.150.570:FF:000001">
    <property type="entry name" value="tRNA uridine 5-carboxymethylaminomethyl modification enzyme MnmG"/>
    <property type="match status" value="1"/>
</dbReference>
<dbReference type="FunFam" id="3.50.50.60:FF:000002">
    <property type="entry name" value="tRNA uridine 5-carboxymethylaminomethyl modification enzyme MnmG"/>
    <property type="match status" value="1"/>
</dbReference>
<dbReference type="Gene3D" id="3.50.50.60">
    <property type="entry name" value="FAD/NAD(P)-binding domain"/>
    <property type="match status" value="2"/>
</dbReference>
<dbReference type="Gene3D" id="1.10.150.570">
    <property type="entry name" value="GidA associated domain, C-terminal subdomain"/>
    <property type="match status" value="1"/>
</dbReference>
<dbReference type="Gene3D" id="1.10.10.1800">
    <property type="entry name" value="tRNA uridine 5-carboxymethylaminomethyl modification enzyme MnmG/GidA"/>
    <property type="match status" value="1"/>
</dbReference>
<dbReference type="HAMAP" id="MF_00129">
    <property type="entry name" value="MnmG_GidA"/>
    <property type="match status" value="1"/>
</dbReference>
<dbReference type="InterPro" id="IPR036188">
    <property type="entry name" value="FAD/NAD-bd_sf"/>
</dbReference>
<dbReference type="InterPro" id="IPR049312">
    <property type="entry name" value="GIDA_C_N"/>
</dbReference>
<dbReference type="InterPro" id="IPR004416">
    <property type="entry name" value="MnmG"/>
</dbReference>
<dbReference type="InterPro" id="IPR002218">
    <property type="entry name" value="MnmG-rel"/>
</dbReference>
<dbReference type="InterPro" id="IPR020595">
    <property type="entry name" value="MnmG-rel_CS"/>
</dbReference>
<dbReference type="InterPro" id="IPR026904">
    <property type="entry name" value="MnmG_C"/>
</dbReference>
<dbReference type="InterPro" id="IPR047001">
    <property type="entry name" value="MnmG_C_subdom"/>
</dbReference>
<dbReference type="InterPro" id="IPR044920">
    <property type="entry name" value="MnmG_C_subdom_sf"/>
</dbReference>
<dbReference type="InterPro" id="IPR040131">
    <property type="entry name" value="MnmG_N"/>
</dbReference>
<dbReference type="NCBIfam" id="TIGR00136">
    <property type="entry name" value="mnmG_gidA"/>
    <property type="match status" value="1"/>
</dbReference>
<dbReference type="PANTHER" id="PTHR11806">
    <property type="entry name" value="GLUCOSE INHIBITED DIVISION PROTEIN A"/>
    <property type="match status" value="1"/>
</dbReference>
<dbReference type="PANTHER" id="PTHR11806:SF0">
    <property type="entry name" value="PROTEIN MTO1 HOMOLOG, MITOCHONDRIAL"/>
    <property type="match status" value="1"/>
</dbReference>
<dbReference type="Pfam" id="PF01134">
    <property type="entry name" value="GIDA"/>
    <property type="match status" value="1"/>
</dbReference>
<dbReference type="Pfam" id="PF21680">
    <property type="entry name" value="GIDA_C_1st"/>
    <property type="match status" value="1"/>
</dbReference>
<dbReference type="Pfam" id="PF13932">
    <property type="entry name" value="SAM_GIDA_C"/>
    <property type="match status" value="1"/>
</dbReference>
<dbReference type="SMART" id="SM01228">
    <property type="entry name" value="GIDA_assoc_3"/>
    <property type="match status" value="1"/>
</dbReference>
<dbReference type="SUPFAM" id="SSF51905">
    <property type="entry name" value="FAD/NAD(P)-binding domain"/>
    <property type="match status" value="1"/>
</dbReference>
<dbReference type="PROSITE" id="PS01280">
    <property type="entry name" value="GIDA_1"/>
    <property type="match status" value="1"/>
</dbReference>
<dbReference type="PROSITE" id="PS01281">
    <property type="entry name" value="GIDA_2"/>
    <property type="match status" value="1"/>
</dbReference>
<accession>P53362</accession>
<name>MNMG_BORBU</name>
<feature type="chain" id="PRO_0000117066" description="tRNA uridine 5-carboxymethylaminomethyl modification enzyme MnmG">
    <location>
        <begin position="1"/>
        <end position="621"/>
    </location>
</feature>
<feature type="binding site" evidence="1">
    <location>
        <begin position="9"/>
        <end position="14"/>
    </location>
    <ligand>
        <name>FAD</name>
        <dbReference type="ChEBI" id="CHEBI:57692"/>
    </ligand>
</feature>
<feature type="binding site" evidence="1">
    <location>
        <begin position="270"/>
        <end position="284"/>
    </location>
    <ligand>
        <name>NAD(+)</name>
        <dbReference type="ChEBI" id="CHEBI:57540"/>
    </ligand>
</feature>
<keyword id="KW-0963">Cytoplasm</keyword>
<keyword id="KW-0274">FAD</keyword>
<keyword id="KW-0285">Flavoprotein</keyword>
<keyword id="KW-0520">NAD</keyword>
<keyword id="KW-1185">Reference proteome</keyword>
<keyword id="KW-0819">tRNA processing</keyword>